<dbReference type="EC" id="6.3.2.4" evidence="2"/>
<dbReference type="EMBL" id="CP000548">
    <property type="protein sequence ID" value="ABO04972.1"/>
    <property type="molecule type" value="Genomic_DNA"/>
</dbReference>
<dbReference type="RefSeq" id="WP_004194254.1">
    <property type="nucleotide sequence ID" value="NZ_CP007802.1"/>
</dbReference>
<dbReference type="SMR" id="A3MR65"/>
<dbReference type="KEGG" id="bmaz:BM44_135"/>
<dbReference type="KEGG" id="bmn:BMA10247_3234"/>
<dbReference type="PATRIC" id="fig|320389.8.peg.144"/>
<dbReference type="UniPathway" id="UPA00219"/>
<dbReference type="GO" id="GO:0005829">
    <property type="term" value="C:cytosol"/>
    <property type="evidence" value="ECO:0007669"/>
    <property type="project" value="TreeGrafter"/>
</dbReference>
<dbReference type="GO" id="GO:0005524">
    <property type="term" value="F:ATP binding"/>
    <property type="evidence" value="ECO:0007669"/>
    <property type="project" value="UniProtKB-KW"/>
</dbReference>
<dbReference type="GO" id="GO:0008716">
    <property type="term" value="F:D-alanine-D-alanine ligase activity"/>
    <property type="evidence" value="ECO:0007669"/>
    <property type="project" value="UniProtKB-UniRule"/>
</dbReference>
<dbReference type="GO" id="GO:0046872">
    <property type="term" value="F:metal ion binding"/>
    <property type="evidence" value="ECO:0007669"/>
    <property type="project" value="UniProtKB-KW"/>
</dbReference>
<dbReference type="GO" id="GO:0071555">
    <property type="term" value="P:cell wall organization"/>
    <property type="evidence" value="ECO:0007669"/>
    <property type="project" value="UniProtKB-KW"/>
</dbReference>
<dbReference type="GO" id="GO:0009252">
    <property type="term" value="P:peptidoglycan biosynthetic process"/>
    <property type="evidence" value="ECO:0007669"/>
    <property type="project" value="UniProtKB-UniRule"/>
</dbReference>
<dbReference type="GO" id="GO:0008360">
    <property type="term" value="P:regulation of cell shape"/>
    <property type="evidence" value="ECO:0007669"/>
    <property type="project" value="UniProtKB-KW"/>
</dbReference>
<dbReference type="FunFam" id="3.30.1490.20:FF:000007">
    <property type="entry name" value="D-alanine--D-alanine ligase"/>
    <property type="match status" value="1"/>
</dbReference>
<dbReference type="FunFam" id="3.30.470.20:FF:000008">
    <property type="entry name" value="D-alanine--D-alanine ligase"/>
    <property type="match status" value="1"/>
</dbReference>
<dbReference type="FunFam" id="3.40.50.20:FF:000013">
    <property type="entry name" value="D-alanine--D-alanine ligase"/>
    <property type="match status" value="1"/>
</dbReference>
<dbReference type="Gene3D" id="3.40.50.20">
    <property type="match status" value="1"/>
</dbReference>
<dbReference type="Gene3D" id="3.30.1490.20">
    <property type="entry name" value="ATP-grasp fold, A domain"/>
    <property type="match status" value="1"/>
</dbReference>
<dbReference type="Gene3D" id="3.30.470.20">
    <property type="entry name" value="ATP-grasp fold, B domain"/>
    <property type="match status" value="1"/>
</dbReference>
<dbReference type="HAMAP" id="MF_00047">
    <property type="entry name" value="Dala_Dala_lig"/>
    <property type="match status" value="1"/>
</dbReference>
<dbReference type="InterPro" id="IPR011761">
    <property type="entry name" value="ATP-grasp"/>
</dbReference>
<dbReference type="InterPro" id="IPR013815">
    <property type="entry name" value="ATP_grasp_subdomain_1"/>
</dbReference>
<dbReference type="InterPro" id="IPR000291">
    <property type="entry name" value="D-Ala_lig_Van_CS"/>
</dbReference>
<dbReference type="InterPro" id="IPR005905">
    <property type="entry name" value="D_ala_D_ala"/>
</dbReference>
<dbReference type="InterPro" id="IPR011095">
    <property type="entry name" value="Dala_Dala_lig_C"/>
</dbReference>
<dbReference type="InterPro" id="IPR011127">
    <property type="entry name" value="Dala_Dala_lig_N"/>
</dbReference>
<dbReference type="InterPro" id="IPR016185">
    <property type="entry name" value="PreATP-grasp_dom_sf"/>
</dbReference>
<dbReference type="NCBIfam" id="TIGR01205">
    <property type="entry name" value="D_ala_D_alaTIGR"/>
    <property type="match status" value="1"/>
</dbReference>
<dbReference type="NCBIfam" id="NF002378">
    <property type="entry name" value="PRK01372.1"/>
    <property type="match status" value="1"/>
</dbReference>
<dbReference type="PANTHER" id="PTHR23132">
    <property type="entry name" value="D-ALANINE--D-ALANINE LIGASE"/>
    <property type="match status" value="1"/>
</dbReference>
<dbReference type="PANTHER" id="PTHR23132:SF23">
    <property type="entry name" value="D-ALANINE--D-ALANINE LIGASE B"/>
    <property type="match status" value="1"/>
</dbReference>
<dbReference type="Pfam" id="PF07478">
    <property type="entry name" value="Dala_Dala_lig_C"/>
    <property type="match status" value="1"/>
</dbReference>
<dbReference type="Pfam" id="PF01820">
    <property type="entry name" value="Dala_Dala_lig_N"/>
    <property type="match status" value="1"/>
</dbReference>
<dbReference type="PIRSF" id="PIRSF039102">
    <property type="entry name" value="Ddl/VanB"/>
    <property type="match status" value="1"/>
</dbReference>
<dbReference type="SUPFAM" id="SSF56059">
    <property type="entry name" value="Glutathione synthetase ATP-binding domain-like"/>
    <property type="match status" value="1"/>
</dbReference>
<dbReference type="SUPFAM" id="SSF52440">
    <property type="entry name" value="PreATP-grasp domain"/>
    <property type="match status" value="1"/>
</dbReference>
<dbReference type="PROSITE" id="PS50975">
    <property type="entry name" value="ATP_GRASP"/>
    <property type="match status" value="1"/>
</dbReference>
<dbReference type="PROSITE" id="PS00843">
    <property type="entry name" value="DALA_DALA_LIGASE_1"/>
    <property type="match status" value="1"/>
</dbReference>
<dbReference type="PROSITE" id="PS00844">
    <property type="entry name" value="DALA_DALA_LIGASE_2"/>
    <property type="match status" value="1"/>
</dbReference>
<name>DDL_BURM7</name>
<sequence>MSGIDPKRFGKVAVLLGGDSAEREVSLNSGRLVLQGLRDAGIDAHPFDPAQRPLAALKDEGFVRAFNALHGGYGENGQIQGALDFYGIRYTGSGVLGSALGLDKFRTKLVWQQTGIPTPPFETVMRGDDYAARAQDIVAKLGVPLFVKPASEGSSVAVEKVKSADALPAALEEAAKHDKIVIVEKSIEGGGEYTACIAADLDLPLIRIVPAGEFYDYHAKYIANDTQYLIPCGLDAAKEAEFKRIARRAFDVLGCTDWGRADFMLDAAGNPYFLEVNTAPGMTDHSLPPKAARAVGIGYSELVVKVLSLTLD</sequence>
<evidence type="ECO:0000250" key="1"/>
<evidence type="ECO:0000255" key="2">
    <source>
        <dbReference type="HAMAP-Rule" id="MF_00047"/>
    </source>
</evidence>
<accession>A3MR65</accession>
<protein>
    <recommendedName>
        <fullName evidence="2">D-alanine--D-alanine ligase</fullName>
        <ecNumber evidence="2">6.3.2.4</ecNumber>
    </recommendedName>
    <alternativeName>
        <fullName evidence="2">D-Ala-D-Ala ligase</fullName>
    </alternativeName>
    <alternativeName>
        <fullName evidence="2">D-alanylalanine synthetase</fullName>
    </alternativeName>
</protein>
<comment type="function">
    <text evidence="2">Cell wall formation.</text>
</comment>
<comment type="catalytic activity">
    <reaction evidence="2">
        <text>2 D-alanine + ATP = D-alanyl-D-alanine + ADP + phosphate + H(+)</text>
        <dbReference type="Rhea" id="RHEA:11224"/>
        <dbReference type="ChEBI" id="CHEBI:15378"/>
        <dbReference type="ChEBI" id="CHEBI:30616"/>
        <dbReference type="ChEBI" id="CHEBI:43474"/>
        <dbReference type="ChEBI" id="CHEBI:57416"/>
        <dbReference type="ChEBI" id="CHEBI:57822"/>
        <dbReference type="ChEBI" id="CHEBI:456216"/>
        <dbReference type="EC" id="6.3.2.4"/>
    </reaction>
</comment>
<comment type="cofactor">
    <cofactor evidence="1">
        <name>Mg(2+)</name>
        <dbReference type="ChEBI" id="CHEBI:18420"/>
    </cofactor>
    <cofactor evidence="1">
        <name>Mn(2+)</name>
        <dbReference type="ChEBI" id="CHEBI:29035"/>
    </cofactor>
    <text evidence="1">Binds 2 magnesium or manganese ions per subunit.</text>
</comment>
<comment type="pathway">
    <text evidence="2">Cell wall biogenesis; peptidoglycan biosynthesis.</text>
</comment>
<comment type="subcellular location">
    <subcellularLocation>
        <location evidence="2">Cytoplasm</location>
    </subcellularLocation>
</comment>
<comment type="similarity">
    <text evidence="2">Belongs to the D-alanine--D-alanine ligase family.</text>
</comment>
<gene>
    <name evidence="2" type="primary">ddl</name>
    <name type="ordered locus">BMA10247_3234</name>
</gene>
<reference key="1">
    <citation type="journal article" date="2010" name="Genome Biol. Evol.">
        <title>Continuing evolution of Burkholderia mallei through genome reduction and large-scale rearrangements.</title>
        <authorList>
            <person name="Losada L."/>
            <person name="Ronning C.M."/>
            <person name="DeShazer D."/>
            <person name="Woods D."/>
            <person name="Fedorova N."/>
            <person name="Kim H.S."/>
            <person name="Shabalina S.A."/>
            <person name="Pearson T.R."/>
            <person name="Brinkac L."/>
            <person name="Tan P."/>
            <person name="Nandi T."/>
            <person name="Crabtree J."/>
            <person name="Badger J."/>
            <person name="Beckstrom-Sternberg S."/>
            <person name="Saqib M."/>
            <person name="Schutzer S.E."/>
            <person name="Keim P."/>
            <person name="Nierman W.C."/>
        </authorList>
    </citation>
    <scope>NUCLEOTIDE SEQUENCE [LARGE SCALE GENOMIC DNA]</scope>
    <source>
        <strain>NCTC 10247</strain>
    </source>
</reference>
<feature type="chain" id="PRO_0000341072" description="D-alanine--D-alanine ligase">
    <location>
        <begin position="1"/>
        <end position="312"/>
    </location>
</feature>
<feature type="domain" description="ATP-grasp" evidence="2">
    <location>
        <begin position="108"/>
        <end position="308"/>
    </location>
</feature>
<feature type="binding site" evidence="2">
    <location>
        <begin position="138"/>
        <end position="193"/>
    </location>
    <ligand>
        <name>ATP</name>
        <dbReference type="ChEBI" id="CHEBI:30616"/>
    </ligand>
</feature>
<feature type="binding site" evidence="2">
    <location>
        <position position="262"/>
    </location>
    <ligand>
        <name>Mg(2+)</name>
        <dbReference type="ChEBI" id="CHEBI:18420"/>
        <label>1</label>
    </ligand>
</feature>
<feature type="binding site" evidence="2">
    <location>
        <position position="275"/>
    </location>
    <ligand>
        <name>Mg(2+)</name>
        <dbReference type="ChEBI" id="CHEBI:18420"/>
        <label>1</label>
    </ligand>
</feature>
<feature type="binding site" evidence="2">
    <location>
        <position position="275"/>
    </location>
    <ligand>
        <name>Mg(2+)</name>
        <dbReference type="ChEBI" id="CHEBI:18420"/>
        <label>2</label>
    </ligand>
</feature>
<feature type="binding site" evidence="2">
    <location>
        <position position="277"/>
    </location>
    <ligand>
        <name>Mg(2+)</name>
        <dbReference type="ChEBI" id="CHEBI:18420"/>
        <label>2</label>
    </ligand>
</feature>
<keyword id="KW-0067">ATP-binding</keyword>
<keyword id="KW-0133">Cell shape</keyword>
<keyword id="KW-0961">Cell wall biogenesis/degradation</keyword>
<keyword id="KW-0963">Cytoplasm</keyword>
<keyword id="KW-0436">Ligase</keyword>
<keyword id="KW-0460">Magnesium</keyword>
<keyword id="KW-0464">Manganese</keyword>
<keyword id="KW-0479">Metal-binding</keyword>
<keyword id="KW-0547">Nucleotide-binding</keyword>
<keyword id="KW-0573">Peptidoglycan synthesis</keyword>
<proteinExistence type="inferred from homology"/>
<organism>
    <name type="scientific">Burkholderia mallei (strain NCTC 10247)</name>
    <dbReference type="NCBI Taxonomy" id="320389"/>
    <lineage>
        <taxon>Bacteria</taxon>
        <taxon>Pseudomonadati</taxon>
        <taxon>Pseudomonadota</taxon>
        <taxon>Betaproteobacteria</taxon>
        <taxon>Burkholderiales</taxon>
        <taxon>Burkholderiaceae</taxon>
        <taxon>Burkholderia</taxon>
        <taxon>pseudomallei group</taxon>
    </lineage>
</organism>